<name>ADCK5_HUMAN</name>
<evidence type="ECO:0000255" key="1"/>
<evidence type="ECO:0000269" key="2">
    <source>
    </source>
</evidence>
<evidence type="ECO:0000305" key="3"/>
<sequence length="580" mass="65828">MWRPVQLCHFHSALLHSRQKPWPSPAVFFRRNVRGLPPRFSSPTPLWRKVLSTAVVGAPLLLGARYVMAEAREKRRMRLVVDGMGRFGRSLKVGLQISLDYWWCTNVVLRGVEENSPGYLEVMSACHQRAADALVAGAISNGGLYVKLGQGLCSFNHLLPPEYTRTLRVLEDRALKRGFQEVDELFLEDFQALPHELFQEFDYQPIAAASLAQVHRAKLHDGTSVAVKVQYIDLRDRFDGDIHTLELLLRLVEVMHPSFGFSWVLQDLKGTLAQELDFENEGRNAERCARELAHFPYVVVPRVHWDKSSKRVLTADFCAGCKVNDVEAIRSQGLAVHDIAEKLIKAFAEQIFYTGFIHSDPHPGNVLVRKGPDGKAELVLLDHGLYQFLEEKDRAALCQLWRAIILRDDAAMRAHAAALGVQDYLLFAEMLMQRPVRLGQLWGSHLLSREEAAYMVDMARERFEAVMAVLRELPRPMLLVLRNINTVRAINVALGAPVDRYFLMAKRAVRGWSRLAGATYRGVYGTSLLRHAKVVWEMLKFEVALRLETLAMRLTALLARALVHLSLVPPAEELYQYLET</sequence>
<proteinExistence type="evidence at protein level"/>
<organism>
    <name type="scientific">Homo sapiens</name>
    <name type="common">Human</name>
    <dbReference type="NCBI Taxonomy" id="9606"/>
    <lineage>
        <taxon>Eukaryota</taxon>
        <taxon>Metazoa</taxon>
        <taxon>Chordata</taxon>
        <taxon>Craniata</taxon>
        <taxon>Vertebrata</taxon>
        <taxon>Euteleostomi</taxon>
        <taxon>Mammalia</taxon>
        <taxon>Eutheria</taxon>
        <taxon>Euarchontoglires</taxon>
        <taxon>Primates</taxon>
        <taxon>Haplorrhini</taxon>
        <taxon>Catarrhini</taxon>
        <taxon>Hominidae</taxon>
        <taxon>Homo</taxon>
    </lineage>
</organism>
<comment type="function">
    <text>The function of this protein is not yet clear. It is not known if it has protein kinase activity and what type of substrate it would phosphorylate (Ser, Thr or Tyr).</text>
</comment>
<comment type="interaction">
    <interactant intactId="EBI-3923548">
        <id>Q3MIX3</id>
    </interactant>
    <interactant intactId="EBI-945833">
        <id>Q7Z3S9</id>
        <label>NOTCH2NLA</label>
    </interactant>
    <organismsDiffer>false</organismsDiffer>
    <experiments>4</experiments>
</comment>
<comment type="subcellular location">
    <subcellularLocation>
        <location evidence="3">Membrane</location>
        <topology evidence="3">Single-pass membrane protein</topology>
    </subcellularLocation>
</comment>
<comment type="similarity">
    <text evidence="3">Belongs to the protein kinase superfamily. ADCK protein kinase family.</text>
</comment>
<comment type="sequence caution" evidence="3">
    <conflict type="erroneous initiation">
        <sequence resource="EMBL-CDS" id="AAH31570"/>
    </conflict>
    <text>Truncated N-terminus.</text>
</comment>
<keyword id="KW-0418">Kinase</keyword>
<keyword id="KW-0472">Membrane</keyword>
<keyword id="KW-1267">Proteomics identification</keyword>
<keyword id="KW-1185">Reference proteome</keyword>
<keyword id="KW-0723">Serine/threonine-protein kinase</keyword>
<keyword id="KW-0808">Transferase</keyword>
<keyword id="KW-0812">Transmembrane</keyword>
<keyword id="KW-1133">Transmembrane helix</keyword>
<protein>
    <recommendedName>
        <fullName>Uncharacterized aarF domain-containing protein kinase 5</fullName>
        <ecNumber>2.7.11.-</ecNumber>
    </recommendedName>
</protein>
<feature type="chain" id="PRO_0000271800" description="Uncharacterized aarF domain-containing protein kinase 5">
    <location>
        <begin position="1"/>
        <end position="580"/>
    </location>
</feature>
<feature type="transmembrane region" description="Helical" evidence="1">
    <location>
        <begin position="50"/>
        <end position="67"/>
    </location>
</feature>
<feature type="domain" description="Protein kinase">
    <location>
        <begin position="179"/>
        <end position="419"/>
    </location>
</feature>
<feature type="sequence variant" id="VAR_029996" description="In dbSNP:rs6599528." evidence="2">
    <original>S</original>
    <variation>R</variation>
    <location>
        <position position="17"/>
    </location>
</feature>
<feature type="sequence conflict" description="In Ref. 1; BAG52608." evidence="3" ref="1">
    <original>E</original>
    <variation>G</variation>
    <location>
        <position position="275"/>
    </location>
</feature>
<feature type="sequence conflict" description="In Ref. 3; AAH85013." evidence="3" ref="3">
    <original>R</original>
    <variation>G</variation>
    <location>
        <position position="283"/>
    </location>
</feature>
<feature type="sequence conflict" description="In Ref. 3; AAH64345." evidence="3" ref="3">
    <original>NDVEAIRSQGLAVHD</original>
    <variation>GGLVLCPLQCLSSPQ</variation>
    <location>
        <begin position="324"/>
        <end position="338"/>
    </location>
</feature>
<accession>Q3MIX3</accession>
<accession>B3KS46</accession>
<accession>Q5U4P1</accession>
<accession>Q6P2S4</accession>
<accession>Q8N5V3</accession>
<dbReference type="EC" id="2.7.11.-"/>
<dbReference type="EMBL" id="AK092773">
    <property type="protein sequence ID" value="BAG52608.1"/>
    <property type="molecule type" value="mRNA"/>
</dbReference>
<dbReference type="EMBL" id="AC233992">
    <property type="status" value="NOT_ANNOTATED_CDS"/>
    <property type="molecule type" value="Genomic_DNA"/>
</dbReference>
<dbReference type="EMBL" id="BC031570">
    <property type="protein sequence ID" value="AAH31570.1"/>
    <property type="status" value="ALT_INIT"/>
    <property type="molecule type" value="mRNA"/>
</dbReference>
<dbReference type="EMBL" id="BC064345">
    <property type="protein sequence ID" value="AAH64345.1"/>
    <property type="molecule type" value="mRNA"/>
</dbReference>
<dbReference type="EMBL" id="BC085013">
    <property type="protein sequence ID" value="AAH85013.1"/>
    <property type="molecule type" value="mRNA"/>
</dbReference>
<dbReference type="EMBL" id="BC101659">
    <property type="protein sequence ID" value="AAI01660.1"/>
    <property type="molecule type" value="mRNA"/>
</dbReference>
<dbReference type="CCDS" id="CCDS34965.2"/>
<dbReference type="RefSeq" id="NP_777582.4">
    <property type="nucleotide sequence ID" value="NM_174922.4"/>
</dbReference>
<dbReference type="SMR" id="Q3MIX3"/>
<dbReference type="BioGRID" id="128442">
    <property type="interactions" value="17"/>
</dbReference>
<dbReference type="FunCoup" id="Q3MIX3">
    <property type="interactions" value="97"/>
</dbReference>
<dbReference type="IntAct" id="Q3MIX3">
    <property type="interactions" value="33"/>
</dbReference>
<dbReference type="MINT" id="Q3MIX3"/>
<dbReference type="STRING" id="9606.ENSP00000310547"/>
<dbReference type="ChEMBL" id="CHEMBL4105886"/>
<dbReference type="DrugCentral" id="Q3MIX3"/>
<dbReference type="iPTMnet" id="Q3MIX3"/>
<dbReference type="PhosphoSitePlus" id="Q3MIX3"/>
<dbReference type="BioMuta" id="ADCK5"/>
<dbReference type="DMDM" id="121958055"/>
<dbReference type="CPTAC" id="non-CPTAC-5660"/>
<dbReference type="jPOST" id="Q3MIX3"/>
<dbReference type="MassIVE" id="Q3MIX3"/>
<dbReference type="PaxDb" id="9606-ENSP00000310547"/>
<dbReference type="PeptideAtlas" id="Q3MIX3"/>
<dbReference type="ProteomicsDB" id="61799"/>
<dbReference type="Pumba" id="Q3MIX3"/>
<dbReference type="Antibodypedia" id="28478">
    <property type="antibodies" value="180 antibodies from 31 providers"/>
</dbReference>
<dbReference type="DNASU" id="203054"/>
<dbReference type="Ensembl" id="ENST00000308860.11">
    <property type="protein sequence ID" value="ENSP00000310547.6"/>
    <property type="gene ID" value="ENSG00000173137.12"/>
</dbReference>
<dbReference type="Ensembl" id="ENST00000645968.2">
    <property type="protein sequence ID" value="ENSP00000494807.1"/>
    <property type="gene ID" value="ENSG00000285451.2"/>
</dbReference>
<dbReference type="GeneID" id="203054"/>
<dbReference type="KEGG" id="hsa:203054"/>
<dbReference type="MANE-Select" id="ENST00000308860.11">
    <property type="protein sequence ID" value="ENSP00000310547.6"/>
    <property type="RefSeq nucleotide sequence ID" value="NM_174922.5"/>
    <property type="RefSeq protein sequence ID" value="NP_777582.4"/>
</dbReference>
<dbReference type="UCSC" id="uc003zch.5">
    <property type="organism name" value="human"/>
</dbReference>
<dbReference type="AGR" id="HGNC:21738"/>
<dbReference type="CTD" id="203054"/>
<dbReference type="DisGeNET" id="203054"/>
<dbReference type="GeneCards" id="ADCK5"/>
<dbReference type="HGNC" id="HGNC:21738">
    <property type="gene designation" value="ADCK5"/>
</dbReference>
<dbReference type="HPA" id="ENSG00000173137">
    <property type="expression patterns" value="Low tissue specificity"/>
</dbReference>
<dbReference type="MalaCards" id="ADCK5"/>
<dbReference type="neXtProt" id="NX_Q3MIX3"/>
<dbReference type="OpenTargets" id="ENSG00000173137"/>
<dbReference type="PharmGKB" id="PA134963849"/>
<dbReference type="VEuPathDB" id="HostDB:ENSG00000173137"/>
<dbReference type="eggNOG" id="KOG1235">
    <property type="taxonomic scope" value="Eukaryota"/>
</dbReference>
<dbReference type="GeneTree" id="ENSGT00940000159821"/>
<dbReference type="HOGENOM" id="CLU_006533_2_6_1"/>
<dbReference type="InParanoid" id="Q3MIX3"/>
<dbReference type="OMA" id="DVMTTMV"/>
<dbReference type="OrthoDB" id="427480at2759"/>
<dbReference type="PAN-GO" id="Q3MIX3">
    <property type="GO annotations" value="0 GO annotations based on evolutionary models"/>
</dbReference>
<dbReference type="PhylomeDB" id="Q3MIX3"/>
<dbReference type="TreeFam" id="TF354300"/>
<dbReference type="PathwayCommons" id="Q3MIX3"/>
<dbReference type="SignaLink" id="Q3MIX3"/>
<dbReference type="SIGNOR" id="Q3MIX3"/>
<dbReference type="BioGRID-ORCS" id="203054">
    <property type="hits" value="14 hits in 1191 CRISPR screens"/>
</dbReference>
<dbReference type="ChiTaRS" id="ADCK5">
    <property type="organism name" value="human"/>
</dbReference>
<dbReference type="GenomeRNAi" id="203054"/>
<dbReference type="Pharos" id="Q3MIX3">
    <property type="development level" value="Tdark"/>
</dbReference>
<dbReference type="PRO" id="PR:Q3MIX3"/>
<dbReference type="Proteomes" id="UP000005640">
    <property type="component" value="Chromosome 8"/>
</dbReference>
<dbReference type="RNAct" id="Q3MIX3">
    <property type="molecule type" value="protein"/>
</dbReference>
<dbReference type="Bgee" id="ENSG00000173137">
    <property type="expression patterns" value="Expressed in mucosa of transverse colon and 96 other cell types or tissues"/>
</dbReference>
<dbReference type="ExpressionAtlas" id="Q3MIX3">
    <property type="expression patterns" value="baseline and differential"/>
</dbReference>
<dbReference type="GO" id="GO:0016020">
    <property type="term" value="C:membrane"/>
    <property type="evidence" value="ECO:0007669"/>
    <property type="project" value="UniProtKB-SubCell"/>
</dbReference>
<dbReference type="GO" id="GO:0005739">
    <property type="term" value="C:mitochondrion"/>
    <property type="evidence" value="ECO:0006056"/>
    <property type="project" value="FlyBase"/>
</dbReference>
<dbReference type="GO" id="GO:0004674">
    <property type="term" value="F:protein serine/threonine kinase activity"/>
    <property type="evidence" value="ECO:0007669"/>
    <property type="project" value="UniProtKB-KW"/>
</dbReference>
<dbReference type="CDD" id="cd13969">
    <property type="entry name" value="ADCK1-like"/>
    <property type="match status" value="1"/>
</dbReference>
<dbReference type="InterPro" id="IPR004147">
    <property type="entry name" value="ABC1_dom"/>
</dbReference>
<dbReference type="InterPro" id="IPR045307">
    <property type="entry name" value="ADCK1_dom"/>
</dbReference>
<dbReference type="InterPro" id="IPR011009">
    <property type="entry name" value="Kinase-like_dom_sf"/>
</dbReference>
<dbReference type="InterPro" id="IPR051130">
    <property type="entry name" value="Mito_struct-func_regulator"/>
</dbReference>
<dbReference type="PANTHER" id="PTHR43173:SF28">
    <property type="entry name" value="AARF DOMAIN CONTAINING KINASE 5"/>
    <property type="match status" value="1"/>
</dbReference>
<dbReference type="PANTHER" id="PTHR43173">
    <property type="entry name" value="ABC1 FAMILY PROTEIN"/>
    <property type="match status" value="1"/>
</dbReference>
<dbReference type="Pfam" id="PF03109">
    <property type="entry name" value="ABC1"/>
    <property type="match status" value="1"/>
</dbReference>
<dbReference type="SUPFAM" id="SSF56112">
    <property type="entry name" value="Protein kinase-like (PK-like)"/>
    <property type="match status" value="1"/>
</dbReference>
<reference key="1">
    <citation type="journal article" date="2004" name="Nat. Genet.">
        <title>Complete sequencing and characterization of 21,243 full-length human cDNAs.</title>
        <authorList>
            <person name="Ota T."/>
            <person name="Suzuki Y."/>
            <person name="Nishikawa T."/>
            <person name="Otsuki T."/>
            <person name="Sugiyama T."/>
            <person name="Irie R."/>
            <person name="Wakamatsu A."/>
            <person name="Hayashi K."/>
            <person name="Sato H."/>
            <person name="Nagai K."/>
            <person name="Kimura K."/>
            <person name="Makita H."/>
            <person name="Sekine M."/>
            <person name="Obayashi M."/>
            <person name="Nishi T."/>
            <person name="Shibahara T."/>
            <person name="Tanaka T."/>
            <person name="Ishii S."/>
            <person name="Yamamoto J."/>
            <person name="Saito K."/>
            <person name="Kawai Y."/>
            <person name="Isono Y."/>
            <person name="Nakamura Y."/>
            <person name="Nagahari K."/>
            <person name="Murakami K."/>
            <person name="Yasuda T."/>
            <person name="Iwayanagi T."/>
            <person name="Wagatsuma M."/>
            <person name="Shiratori A."/>
            <person name="Sudo H."/>
            <person name="Hosoiri T."/>
            <person name="Kaku Y."/>
            <person name="Kodaira H."/>
            <person name="Kondo H."/>
            <person name="Sugawara M."/>
            <person name="Takahashi M."/>
            <person name="Kanda K."/>
            <person name="Yokoi T."/>
            <person name="Furuya T."/>
            <person name="Kikkawa E."/>
            <person name="Omura Y."/>
            <person name="Abe K."/>
            <person name="Kamihara K."/>
            <person name="Katsuta N."/>
            <person name="Sato K."/>
            <person name="Tanikawa M."/>
            <person name="Yamazaki M."/>
            <person name="Ninomiya K."/>
            <person name="Ishibashi T."/>
            <person name="Yamashita H."/>
            <person name="Murakawa K."/>
            <person name="Fujimori K."/>
            <person name="Tanai H."/>
            <person name="Kimata M."/>
            <person name="Watanabe M."/>
            <person name="Hiraoka S."/>
            <person name="Chiba Y."/>
            <person name="Ishida S."/>
            <person name="Ono Y."/>
            <person name="Takiguchi S."/>
            <person name="Watanabe S."/>
            <person name="Yosida M."/>
            <person name="Hotuta T."/>
            <person name="Kusano J."/>
            <person name="Kanehori K."/>
            <person name="Takahashi-Fujii A."/>
            <person name="Hara H."/>
            <person name="Tanase T.-O."/>
            <person name="Nomura Y."/>
            <person name="Togiya S."/>
            <person name="Komai F."/>
            <person name="Hara R."/>
            <person name="Takeuchi K."/>
            <person name="Arita M."/>
            <person name="Imose N."/>
            <person name="Musashino K."/>
            <person name="Yuuki H."/>
            <person name="Oshima A."/>
            <person name="Sasaki N."/>
            <person name="Aotsuka S."/>
            <person name="Yoshikawa Y."/>
            <person name="Matsunawa H."/>
            <person name="Ichihara T."/>
            <person name="Shiohata N."/>
            <person name="Sano S."/>
            <person name="Moriya S."/>
            <person name="Momiyama H."/>
            <person name="Satoh N."/>
            <person name="Takami S."/>
            <person name="Terashima Y."/>
            <person name="Suzuki O."/>
            <person name="Nakagawa S."/>
            <person name="Senoh A."/>
            <person name="Mizoguchi H."/>
            <person name="Goto Y."/>
            <person name="Shimizu F."/>
            <person name="Wakebe H."/>
            <person name="Hishigaki H."/>
            <person name="Watanabe T."/>
            <person name="Sugiyama A."/>
            <person name="Takemoto M."/>
            <person name="Kawakami B."/>
            <person name="Yamazaki M."/>
            <person name="Watanabe K."/>
            <person name="Kumagai A."/>
            <person name="Itakura S."/>
            <person name="Fukuzumi Y."/>
            <person name="Fujimori Y."/>
            <person name="Komiyama M."/>
            <person name="Tashiro H."/>
            <person name="Tanigami A."/>
            <person name="Fujiwara T."/>
            <person name="Ono T."/>
            <person name="Yamada K."/>
            <person name="Fujii Y."/>
            <person name="Ozaki K."/>
            <person name="Hirao M."/>
            <person name="Ohmori Y."/>
            <person name="Kawabata A."/>
            <person name="Hikiji T."/>
            <person name="Kobatake N."/>
            <person name="Inagaki H."/>
            <person name="Ikema Y."/>
            <person name="Okamoto S."/>
            <person name="Okitani R."/>
            <person name="Kawakami T."/>
            <person name="Noguchi S."/>
            <person name="Itoh T."/>
            <person name="Shigeta K."/>
            <person name="Senba T."/>
            <person name="Matsumura K."/>
            <person name="Nakajima Y."/>
            <person name="Mizuno T."/>
            <person name="Morinaga M."/>
            <person name="Sasaki M."/>
            <person name="Togashi T."/>
            <person name="Oyama M."/>
            <person name="Hata H."/>
            <person name="Watanabe M."/>
            <person name="Komatsu T."/>
            <person name="Mizushima-Sugano J."/>
            <person name="Satoh T."/>
            <person name="Shirai Y."/>
            <person name="Takahashi Y."/>
            <person name="Nakagawa K."/>
            <person name="Okumura K."/>
            <person name="Nagase T."/>
            <person name="Nomura N."/>
            <person name="Kikuchi H."/>
            <person name="Masuho Y."/>
            <person name="Yamashita R."/>
            <person name="Nakai K."/>
            <person name="Yada T."/>
            <person name="Nakamura Y."/>
            <person name="Ohara O."/>
            <person name="Isogai T."/>
            <person name="Sugano S."/>
        </authorList>
    </citation>
    <scope>NUCLEOTIDE SEQUENCE [LARGE SCALE MRNA]</scope>
    <scope>VARIANT ARG-17</scope>
    <source>
        <tissue>Small intestine</tissue>
    </source>
</reference>
<reference key="2">
    <citation type="journal article" date="2006" name="Nature">
        <title>DNA sequence and analysis of human chromosome 8.</title>
        <authorList>
            <person name="Nusbaum C."/>
            <person name="Mikkelsen T.S."/>
            <person name="Zody M.C."/>
            <person name="Asakawa S."/>
            <person name="Taudien S."/>
            <person name="Garber M."/>
            <person name="Kodira C.D."/>
            <person name="Schueler M.G."/>
            <person name="Shimizu A."/>
            <person name="Whittaker C.A."/>
            <person name="Chang J.L."/>
            <person name="Cuomo C.A."/>
            <person name="Dewar K."/>
            <person name="FitzGerald M.G."/>
            <person name="Yang X."/>
            <person name="Allen N.R."/>
            <person name="Anderson S."/>
            <person name="Asakawa T."/>
            <person name="Blechschmidt K."/>
            <person name="Bloom T."/>
            <person name="Borowsky M.L."/>
            <person name="Butler J."/>
            <person name="Cook A."/>
            <person name="Corum B."/>
            <person name="DeArellano K."/>
            <person name="DeCaprio D."/>
            <person name="Dooley K.T."/>
            <person name="Dorris L. III"/>
            <person name="Engels R."/>
            <person name="Gloeckner G."/>
            <person name="Hafez N."/>
            <person name="Hagopian D.S."/>
            <person name="Hall J.L."/>
            <person name="Ishikawa S.K."/>
            <person name="Jaffe D.B."/>
            <person name="Kamat A."/>
            <person name="Kudoh J."/>
            <person name="Lehmann R."/>
            <person name="Lokitsang T."/>
            <person name="Macdonald P."/>
            <person name="Major J.E."/>
            <person name="Matthews C.D."/>
            <person name="Mauceli E."/>
            <person name="Menzel U."/>
            <person name="Mihalev A.H."/>
            <person name="Minoshima S."/>
            <person name="Murayama Y."/>
            <person name="Naylor J.W."/>
            <person name="Nicol R."/>
            <person name="Nguyen C."/>
            <person name="O'Leary S.B."/>
            <person name="O'Neill K."/>
            <person name="Parker S.C.J."/>
            <person name="Polley A."/>
            <person name="Raymond C.K."/>
            <person name="Reichwald K."/>
            <person name="Rodriguez J."/>
            <person name="Sasaki T."/>
            <person name="Schilhabel M."/>
            <person name="Siddiqui R."/>
            <person name="Smith C.L."/>
            <person name="Sneddon T.P."/>
            <person name="Talamas J.A."/>
            <person name="Tenzin P."/>
            <person name="Topham K."/>
            <person name="Venkataraman V."/>
            <person name="Wen G."/>
            <person name="Yamazaki S."/>
            <person name="Young S.K."/>
            <person name="Zeng Q."/>
            <person name="Zimmer A.R."/>
            <person name="Rosenthal A."/>
            <person name="Birren B.W."/>
            <person name="Platzer M."/>
            <person name="Shimizu N."/>
            <person name="Lander E.S."/>
        </authorList>
    </citation>
    <scope>NUCLEOTIDE SEQUENCE [LARGE SCALE GENOMIC DNA]</scope>
</reference>
<reference key="3">
    <citation type="journal article" date="2004" name="Genome Res.">
        <title>The status, quality, and expansion of the NIH full-length cDNA project: the Mammalian Gene Collection (MGC).</title>
        <authorList>
            <consortium name="The MGC Project Team"/>
        </authorList>
    </citation>
    <scope>NUCLEOTIDE SEQUENCE [LARGE SCALE MRNA]</scope>
    <source>
        <tissue>Brain</tissue>
        <tissue>Colon</tissue>
        <tissue>Ovary</tissue>
        <tissue>Prostate</tissue>
    </source>
</reference>
<reference key="4">
    <citation type="journal article" date="2007" name="Nature">
        <title>Patterns of somatic mutation in human cancer genomes.</title>
        <authorList>
            <person name="Greenman C."/>
            <person name="Stephens P."/>
            <person name="Smith R."/>
            <person name="Dalgliesh G.L."/>
            <person name="Hunter C."/>
            <person name="Bignell G."/>
            <person name="Davies H."/>
            <person name="Teague J."/>
            <person name="Butler A."/>
            <person name="Stevens C."/>
            <person name="Edkins S."/>
            <person name="O'Meara S."/>
            <person name="Vastrik I."/>
            <person name="Schmidt E.E."/>
            <person name="Avis T."/>
            <person name="Barthorpe S."/>
            <person name="Bhamra G."/>
            <person name="Buck G."/>
            <person name="Choudhury B."/>
            <person name="Clements J."/>
            <person name="Cole J."/>
            <person name="Dicks E."/>
            <person name="Forbes S."/>
            <person name="Gray K."/>
            <person name="Halliday K."/>
            <person name="Harrison R."/>
            <person name="Hills K."/>
            <person name="Hinton J."/>
            <person name="Jenkinson A."/>
            <person name="Jones D."/>
            <person name="Menzies A."/>
            <person name="Mironenko T."/>
            <person name="Perry J."/>
            <person name="Raine K."/>
            <person name="Richardson D."/>
            <person name="Shepherd R."/>
            <person name="Small A."/>
            <person name="Tofts C."/>
            <person name="Varian J."/>
            <person name="Webb T."/>
            <person name="West S."/>
            <person name="Widaa S."/>
            <person name="Yates A."/>
            <person name="Cahill D.P."/>
            <person name="Louis D.N."/>
            <person name="Goldstraw P."/>
            <person name="Nicholson A.G."/>
            <person name="Brasseur F."/>
            <person name="Looijenga L."/>
            <person name="Weber B.L."/>
            <person name="Chiew Y.-E."/>
            <person name="DeFazio A."/>
            <person name="Greaves M.F."/>
            <person name="Green A.R."/>
            <person name="Campbell P."/>
            <person name="Birney E."/>
            <person name="Easton D.F."/>
            <person name="Chenevix-Trench G."/>
            <person name="Tan M.-H."/>
            <person name="Khoo S.K."/>
            <person name="Teh B.T."/>
            <person name="Yuen S.T."/>
            <person name="Leung S.Y."/>
            <person name="Wooster R."/>
            <person name="Futreal P.A."/>
            <person name="Stratton M.R."/>
        </authorList>
    </citation>
    <scope>VARIANT [LARGE SCALE ANALYSIS] ARG-17</scope>
</reference>
<gene>
    <name type="primary">ADCK5</name>
</gene>